<gene>
    <name evidence="1" type="primary">ribL</name>
    <name type="ordered locus">TON_1253</name>
</gene>
<protein>
    <recommendedName>
        <fullName evidence="1">FAD synthase</fullName>
        <ecNumber evidence="1">2.7.7.2</ecNumber>
    </recommendedName>
    <alternativeName>
        <fullName evidence="1">FMN adenylyltransferase</fullName>
    </alternativeName>
    <alternativeName>
        <fullName evidence="1">Flavin adenine dinucleotide synthase</fullName>
    </alternativeName>
</protein>
<organism>
    <name type="scientific">Thermococcus onnurineus (strain NA1)</name>
    <dbReference type="NCBI Taxonomy" id="523850"/>
    <lineage>
        <taxon>Archaea</taxon>
        <taxon>Methanobacteriati</taxon>
        <taxon>Methanobacteriota</taxon>
        <taxon>Thermococci</taxon>
        <taxon>Thermococcales</taxon>
        <taxon>Thermococcaceae</taxon>
        <taxon>Thermococcus</taxon>
    </lineage>
</organism>
<feature type="chain" id="PRO_0000406284" description="FAD synthase">
    <location>
        <begin position="1"/>
        <end position="150"/>
    </location>
</feature>
<feature type="binding site" evidence="1">
    <location>
        <begin position="16"/>
        <end position="17"/>
    </location>
    <ligand>
        <name>ATP</name>
        <dbReference type="ChEBI" id="CHEBI:30616"/>
    </ligand>
</feature>
<feature type="binding site" evidence="1">
    <location>
        <begin position="21"/>
        <end position="24"/>
    </location>
    <ligand>
        <name>ATP</name>
        <dbReference type="ChEBI" id="CHEBI:30616"/>
    </ligand>
</feature>
<feature type="binding site" evidence="1">
    <location>
        <position position="102"/>
    </location>
    <ligand>
        <name>ATP</name>
        <dbReference type="ChEBI" id="CHEBI:30616"/>
    </ligand>
</feature>
<evidence type="ECO:0000255" key="1">
    <source>
        <dbReference type="HAMAP-Rule" id="MF_02115"/>
    </source>
</evidence>
<dbReference type="EC" id="2.7.7.2" evidence="1"/>
<dbReference type="EMBL" id="CP000855">
    <property type="protein sequence ID" value="ACJ16741.1"/>
    <property type="molecule type" value="Genomic_DNA"/>
</dbReference>
<dbReference type="RefSeq" id="WP_012572213.1">
    <property type="nucleotide sequence ID" value="NC_011529.1"/>
</dbReference>
<dbReference type="SMR" id="B6YXC8"/>
<dbReference type="STRING" id="523850.TON_1253"/>
<dbReference type="GeneID" id="7018276"/>
<dbReference type="KEGG" id="ton:TON_1253"/>
<dbReference type="PATRIC" id="fig|523850.10.peg.1260"/>
<dbReference type="eggNOG" id="arCOG01222">
    <property type="taxonomic scope" value="Archaea"/>
</dbReference>
<dbReference type="HOGENOM" id="CLU_034585_2_1_2"/>
<dbReference type="OrthoDB" id="1912at2157"/>
<dbReference type="UniPathway" id="UPA00277">
    <property type="reaction ID" value="UER00407"/>
</dbReference>
<dbReference type="Proteomes" id="UP000002727">
    <property type="component" value="Chromosome"/>
</dbReference>
<dbReference type="GO" id="GO:0005524">
    <property type="term" value="F:ATP binding"/>
    <property type="evidence" value="ECO:0007669"/>
    <property type="project" value="UniProtKB-UniRule"/>
</dbReference>
<dbReference type="GO" id="GO:0003919">
    <property type="term" value="F:FMN adenylyltransferase activity"/>
    <property type="evidence" value="ECO:0007669"/>
    <property type="project" value="UniProtKB-UniRule"/>
</dbReference>
<dbReference type="GO" id="GO:0006747">
    <property type="term" value="P:FAD biosynthetic process"/>
    <property type="evidence" value="ECO:0007669"/>
    <property type="project" value="UniProtKB-UniRule"/>
</dbReference>
<dbReference type="GO" id="GO:0046444">
    <property type="term" value="P:FMN metabolic process"/>
    <property type="evidence" value="ECO:0007669"/>
    <property type="project" value="UniProtKB-UniRule"/>
</dbReference>
<dbReference type="Gene3D" id="3.40.50.620">
    <property type="entry name" value="HUPs"/>
    <property type="match status" value="1"/>
</dbReference>
<dbReference type="HAMAP" id="MF_02115">
    <property type="entry name" value="FAD_synth_arch"/>
    <property type="match status" value="1"/>
</dbReference>
<dbReference type="InterPro" id="IPR050385">
    <property type="entry name" value="Archaeal_FAD_synthase"/>
</dbReference>
<dbReference type="InterPro" id="IPR004821">
    <property type="entry name" value="Cyt_trans-like"/>
</dbReference>
<dbReference type="InterPro" id="IPR024902">
    <property type="entry name" value="FAD_synth_RibL"/>
</dbReference>
<dbReference type="InterPro" id="IPR014729">
    <property type="entry name" value="Rossmann-like_a/b/a_fold"/>
</dbReference>
<dbReference type="NCBIfam" id="TIGR00125">
    <property type="entry name" value="cyt_tran_rel"/>
    <property type="match status" value="1"/>
</dbReference>
<dbReference type="PANTHER" id="PTHR43793">
    <property type="entry name" value="FAD SYNTHASE"/>
    <property type="match status" value="1"/>
</dbReference>
<dbReference type="PANTHER" id="PTHR43793:SF1">
    <property type="entry name" value="FAD SYNTHASE"/>
    <property type="match status" value="1"/>
</dbReference>
<dbReference type="Pfam" id="PF01467">
    <property type="entry name" value="CTP_transf_like"/>
    <property type="match status" value="1"/>
</dbReference>
<dbReference type="SUPFAM" id="SSF52374">
    <property type="entry name" value="Nucleotidylyl transferase"/>
    <property type="match status" value="1"/>
</dbReference>
<accession>B6YXC8</accession>
<proteinExistence type="inferred from homology"/>
<comment type="function">
    <text evidence="1">Catalyzes the transfer of the AMP portion of ATP to flavin mononucleotide (FMN) to produce flavin adenine dinucleotide (FAD) coenzyme.</text>
</comment>
<comment type="catalytic activity">
    <reaction evidence="1">
        <text>FMN + ATP + H(+) = FAD + diphosphate</text>
        <dbReference type="Rhea" id="RHEA:17237"/>
        <dbReference type="ChEBI" id="CHEBI:15378"/>
        <dbReference type="ChEBI" id="CHEBI:30616"/>
        <dbReference type="ChEBI" id="CHEBI:33019"/>
        <dbReference type="ChEBI" id="CHEBI:57692"/>
        <dbReference type="ChEBI" id="CHEBI:58210"/>
        <dbReference type="EC" id="2.7.7.2"/>
    </reaction>
</comment>
<comment type="cofactor">
    <cofactor evidence="1">
        <name>a divalent metal cation</name>
        <dbReference type="ChEBI" id="CHEBI:60240"/>
    </cofactor>
</comment>
<comment type="pathway">
    <text evidence="1">Cofactor biosynthesis; FAD biosynthesis; FAD from FMN: step 1/1.</text>
</comment>
<comment type="subunit">
    <text evidence="1">Homodimer.</text>
</comment>
<comment type="similarity">
    <text evidence="1">Belongs to the archaeal FAD synthase family.</text>
</comment>
<sequence length="150" mass="17376">MEKRERKKIRVLAGGVFDLLHVGHIHFLSQAKSLGDELVVIVAHDETVRMQKRREPVNPAEDRAELLRALKMVDEVYIGSPGTIDYELVRKINPDIVAIGPDQRFSCERLKEELRKHGINSEVIRIPYLYKEDRAKTSKIIQRIVETYCE</sequence>
<keyword id="KW-0067">ATP-binding</keyword>
<keyword id="KW-0274">FAD</keyword>
<keyword id="KW-0285">Flavoprotein</keyword>
<keyword id="KW-0288">FMN</keyword>
<keyword id="KW-0547">Nucleotide-binding</keyword>
<keyword id="KW-0548">Nucleotidyltransferase</keyword>
<keyword id="KW-0808">Transferase</keyword>
<name>RIBL_THEON</name>
<reference key="1">
    <citation type="journal article" date="2008" name="J. Bacteriol.">
        <title>The complete genome sequence of Thermococcus onnurineus NA1 reveals a mixed heterotrophic and carboxydotrophic metabolism.</title>
        <authorList>
            <person name="Lee H.S."/>
            <person name="Kang S.G."/>
            <person name="Bae S.S."/>
            <person name="Lim J.K."/>
            <person name="Cho Y."/>
            <person name="Kim Y.J."/>
            <person name="Jeon J.H."/>
            <person name="Cha S.-S."/>
            <person name="Kwon K.K."/>
            <person name="Kim H.-T."/>
            <person name="Park C.-J."/>
            <person name="Lee H.-W."/>
            <person name="Kim S.I."/>
            <person name="Chun J."/>
            <person name="Colwell R.R."/>
            <person name="Kim S.-J."/>
            <person name="Lee J.-H."/>
        </authorList>
    </citation>
    <scope>NUCLEOTIDE SEQUENCE [LARGE SCALE GENOMIC DNA]</scope>
    <source>
        <strain>NA1</strain>
    </source>
</reference>